<sequence length="139" mass="15666">MSYCRQEGKDKIIFVTKEDHETPSSAELIADDPNDPYEDQGLILPNGDINWNCPCLGGMASGPCGEQFKSAFSCFHYSQEEIKGSDCLDQFRGMQECMQKYPDLYPQEDDEEEAEKEKQNKEAEPSVTQSSDTKEESSS</sequence>
<evidence type="ECO:0000250" key="1"/>
<evidence type="ECO:0000250" key="2">
    <source>
        <dbReference type="UniProtKB" id="Q2KHZ4"/>
    </source>
</evidence>
<evidence type="ECO:0000250" key="3">
    <source>
        <dbReference type="UniProtKB" id="Q8N4Q1"/>
    </source>
</evidence>
<evidence type="ECO:0000255" key="4">
    <source>
        <dbReference type="PROSITE-ProRule" id="PRU01150"/>
    </source>
</evidence>
<evidence type="ECO:0000256" key="5">
    <source>
        <dbReference type="SAM" id="MobiDB-lite"/>
    </source>
</evidence>
<reference key="1">
    <citation type="submission" date="2004-04" db="EMBL/GenBank/DDBJ databases">
        <authorList>
            <consortium name="NIH - Xenopus Gene Collection (XGC) project"/>
        </authorList>
    </citation>
    <scope>NUCLEOTIDE SEQUENCE [LARGE SCALE MRNA]</scope>
    <source>
        <tissue>Embryo</tissue>
    </source>
</reference>
<organism>
    <name type="scientific">Xenopus laevis</name>
    <name type="common">African clawed frog</name>
    <dbReference type="NCBI Taxonomy" id="8355"/>
    <lineage>
        <taxon>Eukaryota</taxon>
        <taxon>Metazoa</taxon>
        <taxon>Chordata</taxon>
        <taxon>Craniata</taxon>
        <taxon>Vertebrata</taxon>
        <taxon>Euteleostomi</taxon>
        <taxon>Amphibia</taxon>
        <taxon>Batrachia</taxon>
        <taxon>Anura</taxon>
        <taxon>Pipoidea</taxon>
        <taxon>Pipidae</taxon>
        <taxon>Xenopodinae</taxon>
        <taxon>Xenopus</taxon>
        <taxon>Xenopus</taxon>
    </lineage>
</organism>
<feature type="chain" id="PRO_0000235279" description="Mitochondrial intermembrane space import and assembly protein 40-A">
    <location>
        <begin position="1"/>
        <end position="139"/>
    </location>
</feature>
<feature type="domain" description="CHCH" evidence="4">
    <location>
        <begin position="61"/>
        <end position="105"/>
    </location>
</feature>
<feature type="region of interest" description="Disordered" evidence="5">
    <location>
        <begin position="103"/>
        <end position="139"/>
    </location>
</feature>
<feature type="short sequence motif" description="Cx9C motif 1" evidence="4">
    <location>
        <begin position="64"/>
        <end position="74"/>
    </location>
</feature>
<feature type="short sequence motif" description="Cx9C motif 2" evidence="4">
    <location>
        <begin position="87"/>
        <end position="97"/>
    </location>
</feature>
<feature type="compositionally biased region" description="Basic and acidic residues" evidence="5">
    <location>
        <begin position="115"/>
        <end position="124"/>
    </location>
</feature>
<feature type="disulfide bond" description="Redox-active" evidence="3">
    <location>
        <begin position="53"/>
        <end position="55"/>
    </location>
</feature>
<feature type="disulfide bond" evidence="4">
    <location>
        <begin position="64"/>
        <end position="97"/>
    </location>
</feature>
<feature type="disulfide bond" evidence="4">
    <location>
        <begin position="74"/>
        <end position="87"/>
    </location>
</feature>
<accession>Q6NU12</accession>
<gene>
    <name type="primary">chchd4-a</name>
    <name type="synonym">mia40-a</name>
</gene>
<dbReference type="EMBL" id="BC068790">
    <property type="protein sequence ID" value="AAH68790.1"/>
    <property type="molecule type" value="mRNA"/>
</dbReference>
<dbReference type="RefSeq" id="NP_001084670.1">
    <property type="nucleotide sequence ID" value="NM_001091201.1"/>
</dbReference>
<dbReference type="SMR" id="Q6NU12"/>
<dbReference type="DNASU" id="414630"/>
<dbReference type="GeneID" id="414630"/>
<dbReference type="KEGG" id="xla:414630"/>
<dbReference type="AGR" id="Xenbase:XB-GENE-968368"/>
<dbReference type="CTD" id="414630"/>
<dbReference type="Xenbase" id="XB-GENE-968368">
    <property type="gene designation" value="chchd4.L"/>
</dbReference>
<dbReference type="OrthoDB" id="7481291at2759"/>
<dbReference type="Proteomes" id="UP000186698">
    <property type="component" value="Chromosome 4L"/>
</dbReference>
<dbReference type="Bgee" id="414630">
    <property type="expression patterns" value="Expressed in heart and 19 other cell types or tissues"/>
</dbReference>
<dbReference type="GO" id="GO:0005758">
    <property type="term" value="C:mitochondrial intermembrane space"/>
    <property type="evidence" value="ECO:0000250"/>
    <property type="project" value="UniProtKB"/>
</dbReference>
<dbReference type="GO" id="GO:0015035">
    <property type="term" value="F:protein-disulfide reductase activity"/>
    <property type="evidence" value="ECO:0000250"/>
    <property type="project" value="UniProtKB"/>
</dbReference>
<dbReference type="GO" id="GO:0160203">
    <property type="term" value="P:mitochondrial disulfide relay system"/>
    <property type="evidence" value="ECO:0000250"/>
    <property type="project" value="UniProtKB"/>
</dbReference>
<dbReference type="GO" id="GO:0045041">
    <property type="term" value="P:protein import into mitochondrial intermembrane space"/>
    <property type="evidence" value="ECO:0000318"/>
    <property type="project" value="GO_Central"/>
</dbReference>
<dbReference type="FunFam" id="1.10.287.2900:FF:000001">
    <property type="entry name" value="mitochondrial intermembrane space import and assembly protein 40"/>
    <property type="match status" value="1"/>
</dbReference>
<dbReference type="Gene3D" id="1.10.287.2900">
    <property type="match status" value="1"/>
</dbReference>
<dbReference type="InterPro" id="IPR010625">
    <property type="entry name" value="CHCH"/>
</dbReference>
<dbReference type="InterPro" id="IPR039289">
    <property type="entry name" value="CHCHD4"/>
</dbReference>
<dbReference type="PANTHER" id="PTHR21622">
    <property type="entry name" value="COILED-COIL-HELIX-COILED-COIL-HELIX DOMAIN CONTAINING 4"/>
    <property type="match status" value="1"/>
</dbReference>
<dbReference type="PANTHER" id="PTHR21622:SF0">
    <property type="entry name" value="COILED-COIL-HELIX-COILED-COIL-HELIX DOMAIN CONTAINING 4"/>
    <property type="match status" value="1"/>
</dbReference>
<dbReference type="Pfam" id="PF06747">
    <property type="entry name" value="CHCH"/>
    <property type="match status" value="1"/>
</dbReference>
<dbReference type="PROSITE" id="PS51808">
    <property type="entry name" value="CHCH"/>
    <property type="match status" value="1"/>
</dbReference>
<proteinExistence type="evidence at transcript level"/>
<name>MI40A_XENLA</name>
<comment type="function">
    <text evidence="2 3">Central component of a redox-sensitive mitochondrial intermembrane space import machinery which is required for the biogenesis of respiratory chain complexes (By similarity). Functions as chaperone and catalyzes the formation of disulfide bonds in substrate proteins, such as COX17 or MICU1. Required for the import and folding of small cysteine-containing proteins (small Tim) in the mitochondrial intermembrane space (IMS). Precursor proteins to be imported into the IMS are translocated in their reduced form into the mitochondria.</text>
</comment>
<comment type="subunit">
    <text evidence="3">Monomer. Can form homooligomers.</text>
</comment>
<comment type="subcellular location">
    <subcellularLocation>
        <location evidence="3">Mitochondrion intermembrane space</location>
    </subcellularLocation>
</comment>
<comment type="domain">
    <text evidence="1">The CHCH domain contains a conserved twin Cys-X(9)-Cys motif which is required for import and stability of MIA40 in mitochondria.</text>
</comment>
<keyword id="KW-1015">Disulfide bond</keyword>
<keyword id="KW-0496">Mitochondrion</keyword>
<keyword id="KW-0560">Oxidoreductase</keyword>
<keyword id="KW-0653">Protein transport</keyword>
<keyword id="KW-0676">Redox-active center</keyword>
<keyword id="KW-1185">Reference proteome</keyword>
<keyword id="KW-0811">Translocation</keyword>
<keyword id="KW-0813">Transport</keyword>
<protein>
    <recommendedName>
        <fullName>Mitochondrial intermembrane space import and assembly protein 40-A</fullName>
    </recommendedName>
    <alternativeName>
        <fullName>Coiled-coil-helix-coiled-coil-helix domain-containing protein 4-A</fullName>
    </alternativeName>
</protein>